<proteinExistence type="inferred from homology"/>
<evidence type="ECO:0000255" key="1">
    <source>
        <dbReference type="HAMAP-Rule" id="MF_00133"/>
    </source>
</evidence>
<reference key="1">
    <citation type="journal article" date="2000" name="Nature">
        <title>The genome sequence of the food-borne pathogen Campylobacter jejuni reveals hypervariable sequences.</title>
        <authorList>
            <person name="Parkhill J."/>
            <person name="Wren B.W."/>
            <person name="Mungall K.L."/>
            <person name="Ketley J.M."/>
            <person name="Churcher C.M."/>
            <person name="Basham D."/>
            <person name="Chillingworth T."/>
            <person name="Davies R.M."/>
            <person name="Feltwell T."/>
            <person name="Holroyd S."/>
            <person name="Jagels K."/>
            <person name="Karlyshev A.V."/>
            <person name="Moule S."/>
            <person name="Pallen M.J."/>
            <person name="Penn C.W."/>
            <person name="Quail M.A."/>
            <person name="Rajandream M.A."/>
            <person name="Rutherford K.M."/>
            <person name="van Vliet A.H.M."/>
            <person name="Whitehead S."/>
            <person name="Barrell B.G."/>
        </authorList>
    </citation>
    <scope>NUCLEOTIDE SEQUENCE [LARGE SCALE GENOMIC DNA]</scope>
    <source>
        <strain>ATCC 700819 / NCTC 11168</strain>
    </source>
</reference>
<organism>
    <name type="scientific">Campylobacter jejuni subsp. jejuni serotype O:2 (strain ATCC 700819 / NCTC 11168)</name>
    <dbReference type="NCBI Taxonomy" id="192222"/>
    <lineage>
        <taxon>Bacteria</taxon>
        <taxon>Pseudomonadati</taxon>
        <taxon>Campylobacterota</taxon>
        <taxon>Epsilonproteobacteria</taxon>
        <taxon>Campylobacterales</taxon>
        <taxon>Campylobacteraceae</taxon>
        <taxon>Campylobacter</taxon>
    </lineage>
</organism>
<comment type="function">
    <text evidence="1">The beta subunit is responsible for the synthesis of L-tryptophan from indole and L-serine.</text>
</comment>
<comment type="catalytic activity">
    <reaction evidence="1">
        <text>(1S,2R)-1-C-(indol-3-yl)glycerol 3-phosphate + L-serine = D-glyceraldehyde 3-phosphate + L-tryptophan + H2O</text>
        <dbReference type="Rhea" id="RHEA:10532"/>
        <dbReference type="ChEBI" id="CHEBI:15377"/>
        <dbReference type="ChEBI" id="CHEBI:33384"/>
        <dbReference type="ChEBI" id="CHEBI:57912"/>
        <dbReference type="ChEBI" id="CHEBI:58866"/>
        <dbReference type="ChEBI" id="CHEBI:59776"/>
        <dbReference type="EC" id="4.2.1.20"/>
    </reaction>
</comment>
<comment type="cofactor">
    <cofactor evidence="1">
        <name>pyridoxal 5'-phosphate</name>
        <dbReference type="ChEBI" id="CHEBI:597326"/>
    </cofactor>
</comment>
<comment type="pathway">
    <text evidence="1">Amino-acid biosynthesis; L-tryptophan biosynthesis; L-tryptophan from chorismate: step 5/5.</text>
</comment>
<comment type="subunit">
    <text evidence="1">Tetramer of two alpha and two beta chains.</text>
</comment>
<comment type="similarity">
    <text evidence="1">Belongs to the TrpB family.</text>
</comment>
<accession>Q9PIF2</accession>
<accession>Q0PBG1</accession>
<name>TRPB_CAMJE</name>
<protein>
    <recommendedName>
        <fullName evidence="1">Tryptophan synthase beta chain</fullName>
        <ecNumber evidence="1">4.2.1.20</ecNumber>
    </recommendedName>
</protein>
<keyword id="KW-0028">Amino-acid biosynthesis</keyword>
<keyword id="KW-0057">Aromatic amino acid biosynthesis</keyword>
<keyword id="KW-0456">Lyase</keyword>
<keyword id="KW-0663">Pyridoxal phosphate</keyword>
<keyword id="KW-1185">Reference proteome</keyword>
<keyword id="KW-0822">Tryptophan biosynthesis</keyword>
<gene>
    <name evidence="1" type="primary">trpB</name>
    <name type="ordered locus">Cj0348</name>
</gene>
<sequence length="392" mass="42947">MKKAYYGDFGGQFLPESAMFALNELEGAFLKFSKDKLFKKELNELLKTYVGRPTPLYFARNLSKKYQHEIYLKREDLNHTGAHKINNAIAQALLAKKMGKKKIIAETGAGQHGLATATAAALLGLECEIYMGATDVQRQALNVYKMELLGAKIHAVQSGLKTLKEATTAAIQAWVGDIKNIFYVVGSAVGPYPYPKMVMHFQSIIGKECKMQLQKLNKKVDYIIAAVGGGSNAAGIFYDFIKDENVKLIGIEAGGLGIDTPYHAATLNKGKTGIIHGMKTKVLQDDLGNILPVHSVSAGLDYPGIGPLHAFLFESKRAQYHAISDEECMQALKLLCKEEGIIAAIESSHALAFLEKLCPTLKKKSVIVVNLSGRGDKDMQMIRDYKKGVIYG</sequence>
<feature type="chain" id="PRO_0000098934" description="Tryptophan synthase beta chain">
    <location>
        <begin position="1"/>
        <end position="392"/>
    </location>
</feature>
<feature type="modified residue" description="N6-(pyridoxal phosphate)lysine" evidence="1">
    <location>
        <position position="84"/>
    </location>
</feature>
<dbReference type="EC" id="4.2.1.20" evidence="1"/>
<dbReference type="EMBL" id="AL111168">
    <property type="protein sequence ID" value="CAL34499.1"/>
    <property type="molecule type" value="Genomic_DNA"/>
</dbReference>
<dbReference type="PIR" id="C81377">
    <property type="entry name" value="C81377"/>
</dbReference>
<dbReference type="RefSeq" id="WP_002854204.1">
    <property type="nucleotide sequence ID" value="NZ_SZUC01000004.1"/>
</dbReference>
<dbReference type="RefSeq" id="YP_002343786.1">
    <property type="nucleotide sequence ID" value="NC_002163.1"/>
</dbReference>
<dbReference type="SMR" id="Q9PIF2"/>
<dbReference type="IntAct" id="Q9PIF2">
    <property type="interactions" value="52"/>
</dbReference>
<dbReference type="STRING" id="192222.Cj0348"/>
<dbReference type="PaxDb" id="192222-Cj0348"/>
<dbReference type="EnsemblBacteria" id="CAL34499">
    <property type="protein sequence ID" value="CAL34499"/>
    <property type="gene ID" value="Cj0348"/>
</dbReference>
<dbReference type="GeneID" id="904672"/>
<dbReference type="KEGG" id="cje:Cj0348"/>
<dbReference type="PATRIC" id="fig|192222.6.peg.340"/>
<dbReference type="eggNOG" id="COG0133">
    <property type="taxonomic scope" value="Bacteria"/>
</dbReference>
<dbReference type="HOGENOM" id="CLU_016734_3_1_7"/>
<dbReference type="OrthoDB" id="9766131at2"/>
<dbReference type="UniPathway" id="UPA00035">
    <property type="reaction ID" value="UER00044"/>
</dbReference>
<dbReference type="Proteomes" id="UP000000799">
    <property type="component" value="Chromosome"/>
</dbReference>
<dbReference type="GO" id="GO:0005737">
    <property type="term" value="C:cytoplasm"/>
    <property type="evidence" value="ECO:0007669"/>
    <property type="project" value="TreeGrafter"/>
</dbReference>
<dbReference type="GO" id="GO:0004834">
    <property type="term" value="F:tryptophan synthase activity"/>
    <property type="evidence" value="ECO:0007669"/>
    <property type="project" value="UniProtKB-UniRule"/>
</dbReference>
<dbReference type="CDD" id="cd06446">
    <property type="entry name" value="Trp-synth_B"/>
    <property type="match status" value="1"/>
</dbReference>
<dbReference type="FunFam" id="3.40.50.1100:FF:000004">
    <property type="entry name" value="Tryptophan synthase beta chain"/>
    <property type="match status" value="1"/>
</dbReference>
<dbReference type="Gene3D" id="3.40.50.1100">
    <property type="match status" value="2"/>
</dbReference>
<dbReference type="HAMAP" id="MF_00133">
    <property type="entry name" value="Trp_synth_beta"/>
    <property type="match status" value="1"/>
</dbReference>
<dbReference type="InterPro" id="IPR006653">
    <property type="entry name" value="Trp_synth_b_CS"/>
</dbReference>
<dbReference type="InterPro" id="IPR006654">
    <property type="entry name" value="Trp_synth_beta"/>
</dbReference>
<dbReference type="InterPro" id="IPR023026">
    <property type="entry name" value="Trp_synth_beta/beta-like"/>
</dbReference>
<dbReference type="InterPro" id="IPR001926">
    <property type="entry name" value="TrpB-like_PALP"/>
</dbReference>
<dbReference type="InterPro" id="IPR036052">
    <property type="entry name" value="TrpB-like_PALP_sf"/>
</dbReference>
<dbReference type="NCBIfam" id="TIGR00263">
    <property type="entry name" value="trpB"/>
    <property type="match status" value="1"/>
</dbReference>
<dbReference type="PANTHER" id="PTHR48077:SF3">
    <property type="entry name" value="TRYPTOPHAN SYNTHASE"/>
    <property type="match status" value="1"/>
</dbReference>
<dbReference type="PANTHER" id="PTHR48077">
    <property type="entry name" value="TRYPTOPHAN SYNTHASE-RELATED"/>
    <property type="match status" value="1"/>
</dbReference>
<dbReference type="Pfam" id="PF00291">
    <property type="entry name" value="PALP"/>
    <property type="match status" value="1"/>
</dbReference>
<dbReference type="PIRSF" id="PIRSF001413">
    <property type="entry name" value="Trp_syn_beta"/>
    <property type="match status" value="1"/>
</dbReference>
<dbReference type="SUPFAM" id="SSF53686">
    <property type="entry name" value="Tryptophan synthase beta subunit-like PLP-dependent enzymes"/>
    <property type="match status" value="1"/>
</dbReference>
<dbReference type="PROSITE" id="PS00168">
    <property type="entry name" value="TRP_SYNTHASE_BETA"/>
    <property type="match status" value="1"/>
</dbReference>